<reference key="1">
    <citation type="journal article" date="2000" name="Nature">
        <title>Sequence and analysis of chromosome 1 of the plant Arabidopsis thaliana.</title>
        <authorList>
            <person name="Theologis A."/>
            <person name="Ecker J.R."/>
            <person name="Palm C.J."/>
            <person name="Federspiel N.A."/>
            <person name="Kaul S."/>
            <person name="White O."/>
            <person name="Alonso J."/>
            <person name="Altafi H."/>
            <person name="Araujo R."/>
            <person name="Bowman C.L."/>
            <person name="Brooks S.Y."/>
            <person name="Buehler E."/>
            <person name="Chan A."/>
            <person name="Chao Q."/>
            <person name="Chen H."/>
            <person name="Cheuk R.F."/>
            <person name="Chin C.W."/>
            <person name="Chung M.K."/>
            <person name="Conn L."/>
            <person name="Conway A.B."/>
            <person name="Conway A.R."/>
            <person name="Creasy T.H."/>
            <person name="Dewar K."/>
            <person name="Dunn P."/>
            <person name="Etgu P."/>
            <person name="Feldblyum T.V."/>
            <person name="Feng J.-D."/>
            <person name="Fong B."/>
            <person name="Fujii C.Y."/>
            <person name="Gill J.E."/>
            <person name="Goldsmith A.D."/>
            <person name="Haas B."/>
            <person name="Hansen N.F."/>
            <person name="Hughes B."/>
            <person name="Huizar L."/>
            <person name="Hunter J.L."/>
            <person name="Jenkins J."/>
            <person name="Johnson-Hopson C."/>
            <person name="Khan S."/>
            <person name="Khaykin E."/>
            <person name="Kim C.J."/>
            <person name="Koo H.L."/>
            <person name="Kremenetskaia I."/>
            <person name="Kurtz D.B."/>
            <person name="Kwan A."/>
            <person name="Lam B."/>
            <person name="Langin-Hooper S."/>
            <person name="Lee A."/>
            <person name="Lee J.M."/>
            <person name="Lenz C.A."/>
            <person name="Li J.H."/>
            <person name="Li Y.-P."/>
            <person name="Lin X."/>
            <person name="Liu S.X."/>
            <person name="Liu Z.A."/>
            <person name="Luros J.S."/>
            <person name="Maiti R."/>
            <person name="Marziali A."/>
            <person name="Militscher J."/>
            <person name="Miranda M."/>
            <person name="Nguyen M."/>
            <person name="Nierman W.C."/>
            <person name="Osborne B.I."/>
            <person name="Pai G."/>
            <person name="Peterson J."/>
            <person name="Pham P.K."/>
            <person name="Rizzo M."/>
            <person name="Rooney T."/>
            <person name="Rowley D."/>
            <person name="Sakano H."/>
            <person name="Salzberg S.L."/>
            <person name="Schwartz J.R."/>
            <person name="Shinn P."/>
            <person name="Southwick A.M."/>
            <person name="Sun H."/>
            <person name="Tallon L.J."/>
            <person name="Tambunga G."/>
            <person name="Toriumi M.J."/>
            <person name="Town C.D."/>
            <person name="Utterback T."/>
            <person name="Van Aken S."/>
            <person name="Vaysberg M."/>
            <person name="Vysotskaia V.S."/>
            <person name="Walker M."/>
            <person name="Wu D."/>
            <person name="Yu G."/>
            <person name="Fraser C.M."/>
            <person name="Venter J.C."/>
            <person name="Davis R.W."/>
        </authorList>
    </citation>
    <scope>NUCLEOTIDE SEQUENCE [LARGE SCALE GENOMIC DNA]</scope>
    <source>
        <strain>cv. Columbia</strain>
    </source>
</reference>
<reference key="2">
    <citation type="journal article" date="2017" name="Plant J.">
        <title>Araport11: a complete reannotation of the Arabidopsis thaliana reference genome.</title>
        <authorList>
            <person name="Cheng C.Y."/>
            <person name="Krishnakumar V."/>
            <person name="Chan A.P."/>
            <person name="Thibaud-Nissen F."/>
            <person name="Schobel S."/>
            <person name="Town C.D."/>
        </authorList>
    </citation>
    <scope>GENOME REANNOTATION</scope>
    <source>
        <strain>cv. Columbia</strain>
    </source>
</reference>
<reference key="3">
    <citation type="journal article" date="2003" name="Science">
        <title>Empirical analysis of transcriptional activity in the Arabidopsis genome.</title>
        <authorList>
            <person name="Yamada K."/>
            <person name="Lim J."/>
            <person name="Dale J.M."/>
            <person name="Chen H."/>
            <person name="Shinn P."/>
            <person name="Palm C.J."/>
            <person name="Southwick A.M."/>
            <person name="Wu H.C."/>
            <person name="Kim C.J."/>
            <person name="Nguyen M."/>
            <person name="Pham P.K."/>
            <person name="Cheuk R.F."/>
            <person name="Karlin-Newmann G."/>
            <person name="Liu S.X."/>
            <person name="Lam B."/>
            <person name="Sakano H."/>
            <person name="Wu T."/>
            <person name="Yu G."/>
            <person name="Miranda M."/>
            <person name="Quach H.L."/>
            <person name="Tripp M."/>
            <person name="Chang C.H."/>
            <person name="Lee J.M."/>
            <person name="Toriumi M.J."/>
            <person name="Chan M.M."/>
            <person name="Tang C.C."/>
            <person name="Onodera C.S."/>
            <person name="Deng J.M."/>
            <person name="Akiyama K."/>
            <person name="Ansari Y."/>
            <person name="Arakawa T."/>
            <person name="Banh J."/>
            <person name="Banno F."/>
            <person name="Bowser L."/>
            <person name="Brooks S.Y."/>
            <person name="Carninci P."/>
            <person name="Chao Q."/>
            <person name="Choy N."/>
            <person name="Enju A."/>
            <person name="Goldsmith A.D."/>
            <person name="Gurjal M."/>
            <person name="Hansen N.F."/>
            <person name="Hayashizaki Y."/>
            <person name="Johnson-Hopson C."/>
            <person name="Hsuan V.W."/>
            <person name="Iida K."/>
            <person name="Karnes M."/>
            <person name="Khan S."/>
            <person name="Koesema E."/>
            <person name="Ishida J."/>
            <person name="Jiang P.X."/>
            <person name="Jones T."/>
            <person name="Kawai J."/>
            <person name="Kamiya A."/>
            <person name="Meyers C."/>
            <person name="Nakajima M."/>
            <person name="Narusaka M."/>
            <person name="Seki M."/>
            <person name="Sakurai T."/>
            <person name="Satou M."/>
            <person name="Tamse R."/>
            <person name="Vaysberg M."/>
            <person name="Wallender E.K."/>
            <person name="Wong C."/>
            <person name="Yamamura Y."/>
            <person name="Yuan S."/>
            <person name="Shinozaki K."/>
            <person name="Davis R.W."/>
            <person name="Theologis A."/>
            <person name="Ecker J.R."/>
        </authorList>
    </citation>
    <scope>NUCLEOTIDE SEQUENCE [LARGE SCALE MRNA]</scope>
    <source>
        <strain>cv. Columbia</strain>
    </source>
</reference>
<reference key="4">
    <citation type="submission" date="2006-07" db="EMBL/GenBank/DDBJ databases">
        <title>Large-scale analysis of RIKEN Arabidopsis full-length (RAFL) cDNAs.</title>
        <authorList>
            <person name="Totoki Y."/>
            <person name="Seki M."/>
            <person name="Ishida J."/>
            <person name="Nakajima M."/>
            <person name="Enju A."/>
            <person name="Kamiya A."/>
            <person name="Narusaka M."/>
            <person name="Shin-i T."/>
            <person name="Nakagawa M."/>
            <person name="Sakamoto N."/>
            <person name="Oishi K."/>
            <person name="Kohara Y."/>
            <person name="Kobayashi M."/>
            <person name="Toyoda A."/>
            <person name="Sakaki Y."/>
            <person name="Sakurai T."/>
            <person name="Iida K."/>
            <person name="Akiyama K."/>
            <person name="Satou M."/>
            <person name="Toyoda T."/>
            <person name="Konagaya A."/>
            <person name="Carninci P."/>
            <person name="Kawai J."/>
            <person name="Hayashizaki Y."/>
            <person name="Shinozaki K."/>
        </authorList>
    </citation>
    <scope>NUCLEOTIDE SEQUENCE [LARGE SCALE MRNA]</scope>
    <source>
        <strain>cv. Columbia</strain>
    </source>
</reference>
<reference key="5">
    <citation type="journal article" date="2007" name="Mol. Cell">
        <title>Purification of a plant mediator from Arabidopsis thaliana identifies PFT1 as the Med25 subunit.</title>
        <authorList>
            <person name="Baeckstroem S."/>
            <person name="Elfving N."/>
            <person name="Nilsson R."/>
            <person name="Wingsle G."/>
            <person name="Bjoerklund S."/>
        </authorList>
    </citation>
    <scope>IDENTIFICATION BY MASS SPECTROMETRY</scope>
    <scope>IDENTIFICATION IN THE MEDIATOR COMPLEX</scope>
    <scope>INTERACTION WITH MED6</scope>
    <scope>NOMENCLATURE</scope>
    <source>
        <strain>cv. Columbia</strain>
    </source>
</reference>
<reference key="6">
    <citation type="journal article" date="2011" name="Plant Physiol.">
        <title>The Mediator complex in plants: structure, phylogeny, and expression profiling of representative genes in a dicot (Arabidopsis) and a monocot (rice) during reproduction and abiotic stress.</title>
        <authorList>
            <person name="Mathur S."/>
            <person name="Vyas S."/>
            <person name="Kapoor S."/>
            <person name="Tyagi A.K."/>
        </authorList>
    </citation>
    <scope>IDENTIFICATION</scope>
    <scope>NOMENCLATURE</scope>
</reference>
<reference key="7">
    <citation type="journal article" date="2015" name="Biochem. J.">
        <title>Biochemical and redox characterization of the mediator complex and its associated transcription factor GeBPL, a GLABROUS1 enhancer binding protein.</title>
        <authorList>
            <person name="Shaikhali J."/>
            <person name="Davoine C."/>
            <person name="Braennstroem K."/>
            <person name="Rouhier N."/>
            <person name="Bygdell J."/>
            <person name="Bjoerklund S."/>
            <person name="Wingsle G."/>
        </authorList>
    </citation>
    <scope>SUBUNIT</scope>
    <scope>MUTAGENESIS OF CYS-55 AND CYS-73</scope>
    <scope>INTERACTION WITH GEBPL</scope>
</reference>
<protein>
    <recommendedName>
        <fullName>Mediator of RNA polymerase II transcription subunit 32</fullName>
    </recommendedName>
    <alternativeName>
        <fullName>Mediator of RNA polymerase II transcription subunit 2</fullName>
    </alternativeName>
</protein>
<name>MED32_ARATH</name>
<gene>
    <name type="primary">MED32</name>
    <name type="synonym">MED2</name>
    <name type="synonym">MED29</name>
    <name type="synonym">MED2_1</name>
    <name type="ordered locus">At1g11760</name>
    <name type="ORF">F25C20.9</name>
</gene>
<proteinExistence type="evidence at protein level"/>
<dbReference type="EMBL" id="AC007296">
    <property type="protein sequence ID" value="AAD30247.1"/>
    <property type="status" value="ALT_SEQ"/>
    <property type="molecule type" value="Genomic_DNA"/>
</dbReference>
<dbReference type="EMBL" id="CP002684">
    <property type="protein sequence ID" value="AEE28781.1"/>
    <property type="molecule type" value="Genomic_DNA"/>
</dbReference>
<dbReference type="EMBL" id="AK228068">
    <property type="protein sequence ID" value="BAF00028.1"/>
    <property type="molecule type" value="mRNA"/>
</dbReference>
<dbReference type="EMBL" id="BT004763">
    <property type="protein sequence ID" value="AAO44029.1"/>
    <property type="molecule type" value="mRNA"/>
</dbReference>
<dbReference type="PIR" id="D86251">
    <property type="entry name" value="D86251"/>
</dbReference>
<dbReference type="RefSeq" id="NP_172641.2">
    <property type="nucleotide sequence ID" value="NM_101048.4"/>
</dbReference>
<dbReference type="SMR" id="Q84VW5"/>
<dbReference type="BioGRID" id="22960">
    <property type="interactions" value="3"/>
</dbReference>
<dbReference type="FunCoup" id="Q84VW5">
    <property type="interactions" value="2188"/>
</dbReference>
<dbReference type="IntAct" id="Q84VW5">
    <property type="interactions" value="8"/>
</dbReference>
<dbReference type="STRING" id="3702.Q84VW5"/>
<dbReference type="iPTMnet" id="Q84VW5"/>
<dbReference type="PaxDb" id="3702-AT1G11760.1"/>
<dbReference type="ProteomicsDB" id="228852"/>
<dbReference type="EnsemblPlants" id="AT1G11760.1">
    <property type="protein sequence ID" value="AT1G11760.1"/>
    <property type="gene ID" value="AT1G11760"/>
</dbReference>
<dbReference type="GeneID" id="837720"/>
<dbReference type="Gramene" id="AT1G11760.1">
    <property type="protein sequence ID" value="AT1G11760.1"/>
    <property type="gene ID" value="AT1G11760"/>
</dbReference>
<dbReference type="KEGG" id="ath:AT1G11760"/>
<dbReference type="Araport" id="AT1G11760"/>
<dbReference type="TAIR" id="AT1G11760">
    <property type="gene designation" value="MED32"/>
</dbReference>
<dbReference type="eggNOG" id="ENOG502RXGF">
    <property type="taxonomic scope" value="Eukaryota"/>
</dbReference>
<dbReference type="HOGENOM" id="CLU_112745_0_0_1"/>
<dbReference type="InParanoid" id="Q84VW5"/>
<dbReference type="OMA" id="ENFKQHW"/>
<dbReference type="OrthoDB" id="782223at2759"/>
<dbReference type="PhylomeDB" id="Q84VW5"/>
<dbReference type="PRO" id="PR:Q84VW5"/>
<dbReference type="Proteomes" id="UP000006548">
    <property type="component" value="Chromosome 1"/>
</dbReference>
<dbReference type="ExpressionAtlas" id="Q84VW5">
    <property type="expression patterns" value="baseline and differential"/>
</dbReference>
<dbReference type="GO" id="GO:0016592">
    <property type="term" value="C:mediator complex"/>
    <property type="evidence" value="ECO:0000314"/>
    <property type="project" value="UniProtKB"/>
</dbReference>
<dbReference type="GO" id="GO:0003712">
    <property type="term" value="F:transcription coregulator activity"/>
    <property type="evidence" value="ECO:0000314"/>
    <property type="project" value="TAIR"/>
</dbReference>
<dbReference type="GO" id="GO:0009738">
    <property type="term" value="P:abscisic acid-activated signaling pathway"/>
    <property type="evidence" value="ECO:0000314"/>
    <property type="project" value="TAIR"/>
</dbReference>
<dbReference type="GO" id="GO:0009631">
    <property type="term" value="P:cold acclimation"/>
    <property type="evidence" value="ECO:0000315"/>
    <property type="project" value="TAIR"/>
</dbReference>
<dbReference type="GO" id="GO:0010150">
    <property type="term" value="P:leaf senescence"/>
    <property type="evidence" value="ECO:0007669"/>
    <property type="project" value="InterPro"/>
</dbReference>
<dbReference type="GO" id="GO:0045944">
    <property type="term" value="P:positive regulation of transcription by RNA polymerase II"/>
    <property type="evidence" value="ECO:0000314"/>
    <property type="project" value="TAIR"/>
</dbReference>
<dbReference type="GO" id="GO:0042542">
    <property type="term" value="P:response to hydrogen peroxide"/>
    <property type="evidence" value="ECO:0000315"/>
    <property type="project" value="TAIR"/>
</dbReference>
<dbReference type="GO" id="GO:0048364">
    <property type="term" value="P:root development"/>
    <property type="evidence" value="ECO:0000315"/>
    <property type="project" value="TAIR"/>
</dbReference>
<dbReference type="InterPro" id="IPR033244">
    <property type="entry name" value="MED32"/>
</dbReference>
<dbReference type="PANTHER" id="PTHR35989">
    <property type="entry name" value="MEDIATOR OF RNA POLYMERASE II TRANSCRIPTION SUBUNIT 32"/>
    <property type="match status" value="1"/>
</dbReference>
<dbReference type="PANTHER" id="PTHR35989:SF1">
    <property type="entry name" value="MEDIATOR OF RNA POLYMERASE II TRANSCRIPTION SUBUNIT 32"/>
    <property type="match status" value="1"/>
</dbReference>
<sequence length="151" mass="16013">MDNIVDSLNKAYEKFVLASAGVLESKESAGGQKALLTDTALENFKEKWELFRVACDQAEEFVESVKQRIGSECLVDEATGLTTTAAGGQAPAAVTGAATSLPPISAVRLEQMSRAVRWLVLELQRGSGVAPGSVHSSSTGFDSRFSEDSTQ</sequence>
<evidence type="ECO:0000256" key="1">
    <source>
        <dbReference type="SAM" id="MobiDB-lite"/>
    </source>
</evidence>
<evidence type="ECO:0000269" key="2">
    <source>
    </source>
</evidence>
<evidence type="ECO:0000269" key="3">
    <source>
    </source>
</evidence>
<evidence type="ECO:0000305" key="4"/>
<evidence type="ECO:0000305" key="5">
    <source>
    </source>
</evidence>
<evidence type="ECO:0000305" key="6">
    <source>
    </source>
</evidence>
<comment type="function">
    <text evidence="5 6">Component of the Mediator complex, a coactivator involved in the regulated transcription of nearly all RNA polymerase II-dependent genes. Mediator functions as a bridge to convey information from gene-specific regulatory proteins to the basal RNA polymerase II transcription machinery. The Mediator complex, having a compact conformation in its free form, is recruited to promoters by direct interactions with regulatory proteins and serves for the assembly of a functional pre-initiation complex with RNA polymerase II and the general transcription factors.</text>
</comment>
<comment type="subunit">
    <text evidence="2 3">Oligomers (PubMed:25877331). Component of the Mediator complex (PubMed:17560376). Interacts with MED6 (PubMed:17560376). Interacts with GEBPL (PubMed:25877331).</text>
</comment>
<comment type="subcellular location">
    <subcellularLocation>
        <location evidence="4">Nucleus</location>
    </subcellularLocation>
</comment>
<comment type="similarity">
    <text evidence="4">Belongs to the mediator complex subunit 32 family.</text>
</comment>
<comment type="sequence caution" evidence="4">
    <conflict type="erroneous gene model prediction">
        <sequence resource="EMBL-CDS" id="AAD30247"/>
    </conflict>
</comment>
<organism>
    <name type="scientific">Arabidopsis thaliana</name>
    <name type="common">Mouse-ear cress</name>
    <dbReference type="NCBI Taxonomy" id="3702"/>
    <lineage>
        <taxon>Eukaryota</taxon>
        <taxon>Viridiplantae</taxon>
        <taxon>Streptophyta</taxon>
        <taxon>Embryophyta</taxon>
        <taxon>Tracheophyta</taxon>
        <taxon>Spermatophyta</taxon>
        <taxon>Magnoliopsida</taxon>
        <taxon>eudicotyledons</taxon>
        <taxon>Gunneridae</taxon>
        <taxon>Pentapetalae</taxon>
        <taxon>rosids</taxon>
        <taxon>malvids</taxon>
        <taxon>Brassicales</taxon>
        <taxon>Brassicaceae</taxon>
        <taxon>Camelineae</taxon>
        <taxon>Arabidopsis</taxon>
    </lineage>
</organism>
<accession>Q84VW5</accession>
<accession>Q9SAA1</accession>
<feature type="chain" id="PRO_0000418116" description="Mediator of RNA polymerase II transcription subunit 32">
    <location>
        <begin position="1"/>
        <end position="151"/>
    </location>
</feature>
<feature type="region of interest" description="Disordered" evidence="1">
    <location>
        <begin position="128"/>
        <end position="151"/>
    </location>
</feature>
<feature type="mutagenesis site" description="Loss of oligomerization." evidence="3">
    <original>C</original>
    <variation>S</variation>
    <location>
        <position position="55"/>
    </location>
</feature>
<feature type="mutagenesis site" description="Loss of oligomerization." evidence="3">
    <original>C</original>
    <variation>S</variation>
    <location>
        <position position="73"/>
    </location>
</feature>
<keyword id="KW-0539">Nucleus</keyword>
<keyword id="KW-1185">Reference proteome</keyword>
<keyword id="KW-0804">Transcription</keyword>
<keyword id="KW-0805">Transcription regulation</keyword>